<organism>
    <name type="scientific">Chlamydia muridarum (strain MoPn / Nigg)</name>
    <dbReference type="NCBI Taxonomy" id="243161"/>
    <lineage>
        <taxon>Bacteria</taxon>
        <taxon>Pseudomonadati</taxon>
        <taxon>Chlamydiota</taxon>
        <taxon>Chlamydiia</taxon>
        <taxon>Chlamydiales</taxon>
        <taxon>Chlamydiaceae</taxon>
        <taxon>Chlamydia/Chlamydophila group</taxon>
        <taxon>Chlamydia</taxon>
    </lineage>
</organism>
<reference key="1">
    <citation type="journal article" date="2000" name="Nucleic Acids Res.">
        <title>Genome sequences of Chlamydia trachomatis MoPn and Chlamydia pneumoniae AR39.</title>
        <authorList>
            <person name="Read T.D."/>
            <person name="Brunham R.C."/>
            <person name="Shen C."/>
            <person name="Gill S.R."/>
            <person name="Heidelberg J.F."/>
            <person name="White O."/>
            <person name="Hickey E.K."/>
            <person name="Peterson J.D."/>
            <person name="Utterback T.R."/>
            <person name="Berry K.J."/>
            <person name="Bass S."/>
            <person name="Linher K.D."/>
            <person name="Weidman J.F."/>
            <person name="Khouri H.M."/>
            <person name="Craven B."/>
            <person name="Bowman C."/>
            <person name="Dodson R.J."/>
            <person name="Gwinn M.L."/>
            <person name="Nelson W.C."/>
            <person name="DeBoy R.T."/>
            <person name="Kolonay J.F."/>
            <person name="McClarty G."/>
            <person name="Salzberg S.L."/>
            <person name="Eisen J.A."/>
            <person name="Fraser C.M."/>
        </authorList>
    </citation>
    <scope>NUCLEOTIDE SEQUENCE [LARGE SCALE GENOMIC DNA]</scope>
    <source>
        <strain>MoPn / Nigg</strain>
    </source>
</reference>
<name>RL22_CHLMU</name>
<dbReference type="EMBL" id="AE002160">
    <property type="protein sequence ID" value="AAF39613.1"/>
    <property type="molecule type" value="Genomic_DNA"/>
</dbReference>
<dbReference type="PIR" id="B81665">
    <property type="entry name" value="B81665"/>
</dbReference>
<dbReference type="RefSeq" id="WP_010231638.1">
    <property type="nucleotide sequence ID" value="NZ_CP063055.1"/>
</dbReference>
<dbReference type="SMR" id="Q9PJL9"/>
<dbReference type="GeneID" id="1246177"/>
<dbReference type="KEGG" id="cmu:TC_0810"/>
<dbReference type="eggNOG" id="COG0091">
    <property type="taxonomic scope" value="Bacteria"/>
</dbReference>
<dbReference type="HOGENOM" id="CLU_083987_3_3_0"/>
<dbReference type="OrthoDB" id="9805969at2"/>
<dbReference type="Proteomes" id="UP000000800">
    <property type="component" value="Chromosome"/>
</dbReference>
<dbReference type="GO" id="GO:0022625">
    <property type="term" value="C:cytosolic large ribosomal subunit"/>
    <property type="evidence" value="ECO:0007669"/>
    <property type="project" value="TreeGrafter"/>
</dbReference>
<dbReference type="GO" id="GO:0019843">
    <property type="term" value="F:rRNA binding"/>
    <property type="evidence" value="ECO:0007669"/>
    <property type="project" value="UniProtKB-UniRule"/>
</dbReference>
<dbReference type="GO" id="GO:0003735">
    <property type="term" value="F:structural constituent of ribosome"/>
    <property type="evidence" value="ECO:0007669"/>
    <property type="project" value="InterPro"/>
</dbReference>
<dbReference type="GO" id="GO:0006412">
    <property type="term" value="P:translation"/>
    <property type="evidence" value="ECO:0007669"/>
    <property type="project" value="UniProtKB-UniRule"/>
</dbReference>
<dbReference type="Gene3D" id="3.90.470.10">
    <property type="entry name" value="Ribosomal protein L22/L17"/>
    <property type="match status" value="1"/>
</dbReference>
<dbReference type="HAMAP" id="MF_01331_B">
    <property type="entry name" value="Ribosomal_uL22_B"/>
    <property type="match status" value="1"/>
</dbReference>
<dbReference type="InterPro" id="IPR001063">
    <property type="entry name" value="Ribosomal_uL22"/>
</dbReference>
<dbReference type="InterPro" id="IPR005727">
    <property type="entry name" value="Ribosomal_uL22_bac/chlpt-type"/>
</dbReference>
<dbReference type="InterPro" id="IPR047867">
    <property type="entry name" value="Ribosomal_uL22_bac/org-type"/>
</dbReference>
<dbReference type="InterPro" id="IPR036394">
    <property type="entry name" value="Ribosomal_uL22_sf"/>
</dbReference>
<dbReference type="NCBIfam" id="TIGR01044">
    <property type="entry name" value="rplV_bact"/>
    <property type="match status" value="1"/>
</dbReference>
<dbReference type="PANTHER" id="PTHR13501">
    <property type="entry name" value="CHLOROPLAST 50S RIBOSOMAL PROTEIN L22-RELATED"/>
    <property type="match status" value="1"/>
</dbReference>
<dbReference type="PANTHER" id="PTHR13501:SF8">
    <property type="entry name" value="LARGE RIBOSOMAL SUBUNIT PROTEIN UL22M"/>
    <property type="match status" value="1"/>
</dbReference>
<dbReference type="Pfam" id="PF00237">
    <property type="entry name" value="Ribosomal_L22"/>
    <property type="match status" value="1"/>
</dbReference>
<dbReference type="SUPFAM" id="SSF54843">
    <property type="entry name" value="Ribosomal protein L22"/>
    <property type="match status" value="1"/>
</dbReference>
<evidence type="ECO:0000255" key="1">
    <source>
        <dbReference type="HAMAP-Rule" id="MF_01331"/>
    </source>
</evidence>
<evidence type="ECO:0000305" key="2"/>
<protein>
    <recommendedName>
        <fullName evidence="1">Large ribosomal subunit protein uL22</fullName>
    </recommendedName>
    <alternativeName>
        <fullName evidence="2">50S ribosomal protein L22</fullName>
    </alternativeName>
</protein>
<comment type="function">
    <text evidence="1">This protein binds specifically to 23S rRNA; its binding is stimulated by other ribosomal proteins, e.g. L4, L17, and L20. It is important during the early stages of 50S assembly. It makes multiple contacts with different domains of the 23S rRNA in the assembled 50S subunit and ribosome (By similarity).</text>
</comment>
<comment type="function">
    <text evidence="1">The globular domain of the protein is located near the polypeptide exit tunnel on the outside of the subunit, while an extended beta-hairpin is found that lines the wall of the exit tunnel in the center of the 70S ribosome.</text>
</comment>
<comment type="subunit">
    <text evidence="1">Part of the 50S ribosomal subunit.</text>
</comment>
<comment type="similarity">
    <text evidence="1">Belongs to the universal ribosomal protein uL22 family.</text>
</comment>
<feature type="chain" id="PRO_0000125137" description="Large ribosomal subunit protein uL22">
    <location>
        <begin position="1"/>
        <end position="111"/>
    </location>
</feature>
<proteinExistence type="inferred from homology"/>
<accession>Q9PJL9</accession>
<gene>
    <name evidence="1" type="primary">rplV</name>
    <name type="synonym">rl22</name>
    <name type="ordered locus">TC_0810</name>
</gene>
<sequence>MFKATARYIRVQPRKARLAAGLMRNRSVVEAQQQLSFSQMKAGRCLKKVLDSAVANAESNENVKRENLCVVEVRVDAGPMFKRVKSKSRGGRAPVLKRTSHLTVIVGERGQ</sequence>
<keyword id="KW-0687">Ribonucleoprotein</keyword>
<keyword id="KW-0689">Ribosomal protein</keyword>
<keyword id="KW-0694">RNA-binding</keyword>
<keyword id="KW-0699">rRNA-binding</keyword>